<proteinExistence type="inferred from homology"/>
<comment type="function">
    <text evidence="2">Component of the ubiquinol-cytochrome c reductase complex (complex III or cytochrome b-c1 complex) that is part of the mitochondrial respiratory chain. The b-c1 complex mediates electron transfer from ubiquinol to cytochrome c. Contributes to the generation of a proton gradient across the mitochondrial membrane that is then used for ATP synthesis.</text>
</comment>
<comment type="cofactor">
    <cofactor evidence="2">
        <name>heme b</name>
        <dbReference type="ChEBI" id="CHEBI:60344"/>
    </cofactor>
    <text evidence="2">Binds 2 heme b groups non-covalently.</text>
</comment>
<comment type="subunit">
    <text evidence="2">The cytochrome bc1 complex contains 11 subunits: 3 respiratory subunits (MT-CYB, CYC1 and UQCRFS1), 2 core proteins (UQCRC1 and UQCRC2) and 6 low-molecular weight proteins (UQCRH/QCR6, UQCRB/QCR7, UQCRQ/QCR8, UQCR10/QCR9, UQCR11/QCR10 and a cleavage product of UQCRFS1). This cytochrome bc1 complex then forms a dimer.</text>
</comment>
<comment type="subcellular location">
    <subcellularLocation>
        <location evidence="2">Mitochondrion inner membrane</location>
        <topology evidence="2">Multi-pass membrane protein</topology>
    </subcellularLocation>
</comment>
<comment type="miscellaneous">
    <text evidence="1">Heme 1 (or BL or b562) is low-potential and absorbs at about 562 nm, and heme 2 (or BH or b566) is high-potential and absorbs at about 566 nm.</text>
</comment>
<comment type="similarity">
    <text evidence="3 4">Belongs to the cytochrome b family.</text>
</comment>
<comment type="caution">
    <text evidence="2">The full-length protein contains only eight transmembrane helices, not nine as predicted by bioinformatics tools.</text>
</comment>
<evidence type="ECO:0000250" key="1"/>
<evidence type="ECO:0000250" key="2">
    <source>
        <dbReference type="UniProtKB" id="P00157"/>
    </source>
</evidence>
<evidence type="ECO:0000255" key="3">
    <source>
        <dbReference type="PROSITE-ProRule" id="PRU00967"/>
    </source>
</evidence>
<evidence type="ECO:0000255" key="4">
    <source>
        <dbReference type="PROSITE-ProRule" id="PRU00968"/>
    </source>
</evidence>
<geneLocation type="mitochondrion"/>
<feature type="chain" id="PRO_0000061588" description="Cytochrome b">
    <location>
        <begin position="1"/>
        <end position="379"/>
    </location>
</feature>
<feature type="transmembrane region" description="Helical" evidence="2">
    <location>
        <begin position="33"/>
        <end position="53"/>
    </location>
</feature>
<feature type="transmembrane region" description="Helical" evidence="2">
    <location>
        <begin position="77"/>
        <end position="98"/>
    </location>
</feature>
<feature type="transmembrane region" description="Helical" evidence="2">
    <location>
        <begin position="113"/>
        <end position="133"/>
    </location>
</feature>
<feature type="transmembrane region" description="Helical" evidence="2">
    <location>
        <begin position="178"/>
        <end position="198"/>
    </location>
</feature>
<feature type="transmembrane region" description="Helical" evidence="2">
    <location>
        <begin position="226"/>
        <end position="246"/>
    </location>
</feature>
<feature type="transmembrane region" description="Helical" evidence="2">
    <location>
        <begin position="288"/>
        <end position="308"/>
    </location>
</feature>
<feature type="transmembrane region" description="Helical" evidence="2">
    <location>
        <begin position="320"/>
        <end position="340"/>
    </location>
</feature>
<feature type="transmembrane region" description="Helical" evidence="2">
    <location>
        <begin position="347"/>
        <end position="367"/>
    </location>
</feature>
<feature type="binding site" description="axial binding residue" evidence="2">
    <location>
        <position position="83"/>
    </location>
    <ligand>
        <name>heme b</name>
        <dbReference type="ChEBI" id="CHEBI:60344"/>
        <label>b562</label>
    </ligand>
    <ligandPart>
        <name>Fe</name>
        <dbReference type="ChEBI" id="CHEBI:18248"/>
    </ligandPart>
</feature>
<feature type="binding site" description="axial binding residue" evidence="2">
    <location>
        <position position="97"/>
    </location>
    <ligand>
        <name>heme b</name>
        <dbReference type="ChEBI" id="CHEBI:60344"/>
        <label>b566</label>
    </ligand>
    <ligandPart>
        <name>Fe</name>
        <dbReference type="ChEBI" id="CHEBI:18248"/>
    </ligandPart>
</feature>
<feature type="binding site" description="axial binding residue" evidence="2">
    <location>
        <position position="182"/>
    </location>
    <ligand>
        <name>heme b</name>
        <dbReference type="ChEBI" id="CHEBI:60344"/>
        <label>b562</label>
    </ligand>
    <ligandPart>
        <name>Fe</name>
        <dbReference type="ChEBI" id="CHEBI:18248"/>
    </ligandPart>
</feature>
<feature type="binding site" description="axial binding residue" evidence="2">
    <location>
        <position position="196"/>
    </location>
    <ligand>
        <name>heme b</name>
        <dbReference type="ChEBI" id="CHEBI:60344"/>
        <label>b566</label>
    </ligand>
    <ligandPart>
        <name>Fe</name>
        <dbReference type="ChEBI" id="CHEBI:18248"/>
    </ligandPart>
</feature>
<feature type="binding site" evidence="2">
    <location>
        <position position="201"/>
    </location>
    <ligand>
        <name>a ubiquinone</name>
        <dbReference type="ChEBI" id="CHEBI:16389"/>
    </ligand>
</feature>
<feature type="sequence variant" description="In strain: Isolate South Africa.">
    <original>L</original>
    <variation>F</variation>
    <location>
        <position position="185"/>
    </location>
</feature>
<feature type="sequence variant" description="In strain: Isolate South Africa.">
    <original>A</original>
    <variation>V</variation>
    <location>
        <position position="193"/>
    </location>
</feature>
<feature type="sequence variant" description="In strain: Isolate South Africa.">
    <original>L</original>
    <variation>F</variation>
    <location>
        <position position="296"/>
    </location>
</feature>
<feature type="sequence variant" description="In strain: Isolate South Africa.">
    <original>L</original>
    <variation>F</variation>
    <location>
        <position position="320"/>
    </location>
</feature>
<gene>
    <name type="primary">MT-CYB</name>
    <name type="synonym">COB</name>
    <name type="synonym">CYTB</name>
    <name type="synonym">MTCYB</name>
</gene>
<organism>
    <name type="scientific">Sousa chinensis</name>
    <name type="common">Indo-pacific humpbacked dolphin</name>
    <name type="synonym">Steno chinensis</name>
    <dbReference type="NCBI Taxonomy" id="103600"/>
    <lineage>
        <taxon>Eukaryota</taxon>
        <taxon>Metazoa</taxon>
        <taxon>Chordata</taxon>
        <taxon>Craniata</taxon>
        <taxon>Vertebrata</taxon>
        <taxon>Euteleostomi</taxon>
        <taxon>Mammalia</taxon>
        <taxon>Eutheria</taxon>
        <taxon>Laurasiatheria</taxon>
        <taxon>Artiodactyla</taxon>
        <taxon>Whippomorpha</taxon>
        <taxon>Cetacea</taxon>
        <taxon>Odontoceti</taxon>
        <taxon>Delphinidae</taxon>
        <taxon>Sousa</taxon>
    </lineage>
</organism>
<reference key="1">
    <citation type="journal article" date="1999" name="Mar. Mamm. Sci.">
        <title>Phylogenetic relationships among the delphinid cetaceans based on full cytochrome b sequences.</title>
        <authorList>
            <person name="LeDuc R.G."/>
            <person name="Perrin W.F."/>
            <person name="Dizon A.E."/>
        </authorList>
    </citation>
    <scope>NUCLEOTIDE SEQUENCE [GENOMIC DNA]</scope>
    <source>
        <strain>Isolate South Africa</strain>
    </source>
</reference>
<protein>
    <recommendedName>
        <fullName>Cytochrome b</fullName>
    </recommendedName>
    <alternativeName>
        <fullName>Complex III subunit 3</fullName>
    </alternativeName>
    <alternativeName>
        <fullName>Complex III subunit III</fullName>
    </alternativeName>
    <alternativeName>
        <fullName>Cytochrome b-c1 complex subunit 3</fullName>
    </alternativeName>
    <alternativeName>
        <fullName>Ubiquinol-cytochrome-c reductase complex cytochrome b subunit</fullName>
    </alternativeName>
</protein>
<sequence length="379" mass="42678">MTNIRKTHPLMKILNDAFIDLPTPSNISSWWNFGSLLGLCLIMQILTGLFLAMHYTPDTSTAFSSVAHICRDVNYGWFIRYLHANGASMFFICLYAHIGRGLYYGSYMFQETWNIGVLLLLTVMATAFVGYVLPWGQMSFWGATVITNLLSAIPYIGTTLVEWIWGGFSVDKATLTRFFAFHFILPFIITALAAVHLLFLHETGSNNPTGIPSNMDMIPFHPYYTIKDILGALLLILTLLALTLFTPDLLGDPDNYTPANPLSTPAHIKPEWYFLFAYAILRSIPNKLGGVLALLLSILILIFIPMLQTSKQRSMMFRPLSQLLFWTLIADLLTLTWIGGQPVEHPYIIVGQLASILYFLLILVLMPTAGLIENKLLKW</sequence>
<dbReference type="EMBL" id="AF084079">
    <property type="protein sequence ID" value="AAD54456.1"/>
    <property type="molecule type" value="Genomic_DNA"/>
</dbReference>
<dbReference type="EMBL" id="AF084080">
    <property type="protein sequence ID" value="AAD54457.1"/>
    <property type="molecule type" value="Genomic_DNA"/>
</dbReference>
<dbReference type="SMR" id="Q9TDK6"/>
<dbReference type="GO" id="GO:0005743">
    <property type="term" value="C:mitochondrial inner membrane"/>
    <property type="evidence" value="ECO:0007669"/>
    <property type="project" value="UniProtKB-SubCell"/>
</dbReference>
<dbReference type="GO" id="GO:0045275">
    <property type="term" value="C:respiratory chain complex III"/>
    <property type="evidence" value="ECO:0007669"/>
    <property type="project" value="InterPro"/>
</dbReference>
<dbReference type="GO" id="GO:0046872">
    <property type="term" value="F:metal ion binding"/>
    <property type="evidence" value="ECO:0007669"/>
    <property type="project" value="UniProtKB-KW"/>
</dbReference>
<dbReference type="GO" id="GO:0008121">
    <property type="term" value="F:ubiquinol-cytochrome-c reductase activity"/>
    <property type="evidence" value="ECO:0007669"/>
    <property type="project" value="InterPro"/>
</dbReference>
<dbReference type="GO" id="GO:0006122">
    <property type="term" value="P:mitochondrial electron transport, ubiquinol to cytochrome c"/>
    <property type="evidence" value="ECO:0007669"/>
    <property type="project" value="TreeGrafter"/>
</dbReference>
<dbReference type="CDD" id="cd00290">
    <property type="entry name" value="cytochrome_b_C"/>
    <property type="match status" value="1"/>
</dbReference>
<dbReference type="CDD" id="cd00284">
    <property type="entry name" value="Cytochrome_b_N"/>
    <property type="match status" value="1"/>
</dbReference>
<dbReference type="FunFam" id="1.20.810.10:FF:000002">
    <property type="entry name" value="Cytochrome b"/>
    <property type="match status" value="1"/>
</dbReference>
<dbReference type="Gene3D" id="1.20.810.10">
    <property type="entry name" value="Cytochrome Bc1 Complex, Chain C"/>
    <property type="match status" value="1"/>
</dbReference>
<dbReference type="InterPro" id="IPR005798">
    <property type="entry name" value="Cyt_b/b6_C"/>
</dbReference>
<dbReference type="InterPro" id="IPR036150">
    <property type="entry name" value="Cyt_b/b6_C_sf"/>
</dbReference>
<dbReference type="InterPro" id="IPR005797">
    <property type="entry name" value="Cyt_b/b6_N"/>
</dbReference>
<dbReference type="InterPro" id="IPR027387">
    <property type="entry name" value="Cytb/b6-like_sf"/>
</dbReference>
<dbReference type="InterPro" id="IPR030689">
    <property type="entry name" value="Cytochrome_b"/>
</dbReference>
<dbReference type="InterPro" id="IPR048260">
    <property type="entry name" value="Cytochrome_b_C_euk/bac"/>
</dbReference>
<dbReference type="InterPro" id="IPR048259">
    <property type="entry name" value="Cytochrome_b_N_euk/bac"/>
</dbReference>
<dbReference type="InterPro" id="IPR016174">
    <property type="entry name" value="Di-haem_cyt_TM"/>
</dbReference>
<dbReference type="PANTHER" id="PTHR19271">
    <property type="entry name" value="CYTOCHROME B"/>
    <property type="match status" value="1"/>
</dbReference>
<dbReference type="PANTHER" id="PTHR19271:SF16">
    <property type="entry name" value="CYTOCHROME B"/>
    <property type="match status" value="1"/>
</dbReference>
<dbReference type="Pfam" id="PF00032">
    <property type="entry name" value="Cytochrom_B_C"/>
    <property type="match status" value="1"/>
</dbReference>
<dbReference type="Pfam" id="PF00033">
    <property type="entry name" value="Cytochrome_B"/>
    <property type="match status" value="1"/>
</dbReference>
<dbReference type="PIRSF" id="PIRSF038885">
    <property type="entry name" value="COB"/>
    <property type="match status" value="1"/>
</dbReference>
<dbReference type="SUPFAM" id="SSF81648">
    <property type="entry name" value="a domain/subunit of cytochrome bc1 complex (Ubiquinol-cytochrome c reductase)"/>
    <property type="match status" value="1"/>
</dbReference>
<dbReference type="SUPFAM" id="SSF81342">
    <property type="entry name" value="Transmembrane di-heme cytochromes"/>
    <property type="match status" value="1"/>
</dbReference>
<dbReference type="PROSITE" id="PS51003">
    <property type="entry name" value="CYTB_CTER"/>
    <property type="match status" value="1"/>
</dbReference>
<dbReference type="PROSITE" id="PS51002">
    <property type="entry name" value="CYTB_NTER"/>
    <property type="match status" value="1"/>
</dbReference>
<keyword id="KW-0249">Electron transport</keyword>
<keyword id="KW-0349">Heme</keyword>
<keyword id="KW-0408">Iron</keyword>
<keyword id="KW-0472">Membrane</keyword>
<keyword id="KW-0479">Metal-binding</keyword>
<keyword id="KW-0496">Mitochondrion</keyword>
<keyword id="KW-0999">Mitochondrion inner membrane</keyword>
<keyword id="KW-0679">Respiratory chain</keyword>
<keyword id="KW-0812">Transmembrane</keyword>
<keyword id="KW-1133">Transmembrane helix</keyword>
<keyword id="KW-0813">Transport</keyword>
<keyword id="KW-0830">Ubiquinone</keyword>
<name>CYB_SOUCH</name>
<accession>Q9TDK6</accession>
<accession>Q9TDK5</accession>